<keyword id="KW-0297">G-protein coupled receptor</keyword>
<keyword id="KW-0325">Glycoprotein</keyword>
<keyword id="KW-0472">Membrane</keyword>
<keyword id="KW-0675">Receptor</keyword>
<keyword id="KW-1185">Reference proteome</keyword>
<keyword id="KW-0716">Sensory transduction</keyword>
<keyword id="KW-0919">Taste</keyword>
<keyword id="KW-0807">Transducer</keyword>
<keyword id="KW-0812">Transmembrane</keyword>
<keyword id="KW-1133">Transmembrane helix</keyword>
<reference key="1">
    <citation type="journal article" date="2009" name="PLoS Biol.">
        <title>Lineage-specific biology revealed by a finished genome assembly of the mouse.</title>
        <authorList>
            <person name="Church D.M."/>
            <person name="Goodstadt L."/>
            <person name="Hillier L.W."/>
            <person name="Zody M.C."/>
            <person name="Goldstein S."/>
            <person name="She X."/>
            <person name="Bult C.J."/>
            <person name="Agarwala R."/>
            <person name="Cherry J.L."/>
            <person name="DiCuccio M."/>
            <person name="Hlavina W."/>
            <person name="Kapustin Y."/>
            <person name="Meric P."/>
            <person name="Maglott D."/>
            <person name="Birtle Z."/>
            <person name="Marques A.C."/>
            <person name="Graves T."/>
            <person name="Zhou S."/>
            <person name="Teague B."/>
            <person name="Potamousis K."/>
            <person name="Churas C."/>
            <person name="Place M."/>
            <person name="Herschleb J."/>
            <person name="Runnheim R."/>
            <person name="Forrest D."/>
            <person name="Amos-Landgraf J."/>
            <person name="Schwartz D.C."/>
            <person name="Cheng Z."/>
            <person name="Lindblad-Toh K."/>
            <person name="Eichler E.E."/>
            <person name="Ponting C.P."/>
        </authorList>
    </citation>
    <scope>NUCLEOTIDE SEQUENCE [LARGE SCALE GENOMIC DNA]</scope>
    <source>
        <strain>C57BL/6J</strain>
    </source>
</reference>
<reference evidence="3 4" key="2">
    <citation type="journal article" date="2003" name="Mol. Biol. Evol.">
        <title>Adaptive diversification of bitter taste receptor genes in mammalian evolution.</title>
        <authorList>
            <person name="Shi P."/>
            <person name="Zhang J."/>
            <person name="Yang H."/>
            <person name="Zhang Y.-P."/>
        </authorList>
    </citation>
    <scope>IDENTIFICATION</scope>
</reference>
<sequence>MVPVLHSLSTIILIAEFVWGNLSNGLIVLKNCIDWINKKELSTVDQILIVLAISRISLIWETLIIWVKDQLISSITIEELKIIVFSFILSSHFSLWLATALSIFYLFRIPNCYWQIFLYLKWRIKQLIVHMLLGSLVFLVANMIQITITLEERFYQYGGNTSVNSMETEFSILIELMLFNMTMFSIIPFSLALISFLLLIFSLWKHLQKMPLNSRGDRDPSATAHRNALRILVSFLLLYTIYFLSLLISWVAQKNQSELVHIICMITSLVYPSFHSYILILGNYKLKQTSLWVMRQLGCRMKRQNTPTT</sequence>
<gene>
    <name evidence="5" type="primary">Tas2r124</name>
    <name evidence="2" type="synonym">T2r50</name>
</gene>
<organism>
    <name type="scientific">Mus musculus</name>
    <name type="common">Mouse</name>
    <dbReference type="NCBI Taxonomy" id="10090"/>
    <lineage>
        <taxon>Eukaryota</taxon>
        <taxon>Metazoa</taxon>
        <taxon>Chordata</taxon>
        <taxon>Craniata</taxon>
        <taxon>Vertebrata</taxon>
        <taxon>Euteleostomi</taxon>
        <taxon>Mammalia</taxon>
        <taxon>Eutheria</taxon>
        <taxon>Euarchontoglires</taxon>
        <taxon>Glires</taxon>
        <taxon>Rodentia</taxon>
        <taxon>Myomorpha</taxon>
        <taxon>Muroidea</taxon>
        <taxon>Muridae</taxon>
        <taxon>Murinae</taxon>
        <taxon>Mus</taxon>
        <taxon>Mus</taxon>
    </lineage>
</organism>
<accession>Q7M718</accession>
<protein>
    <recommendedName>
        <fullName>Taste receptor type 2 member 124</fullName>
        <shortName>T2R124</shortName>
        <shortName>mT2R50</shortName>
    </recommendedName>
</protein>
<feature type="chain" id="PRO_0000248481" description="Taste receptor type 2 member 124">
    <location>
        <begin position="1"/>
        <end position="309"/>
    </location>
</feature>
<feature type="topological domain" description="Extracellular" evidence="1">
    <location>
        <begin position="1"/>
        <end position="7"/>
    </location>
</feature>
<feature type="transmembrane region" description="Helical; Name=1" evidence="1">
    <location>
        <begin position="8"/>
        <end position="28"/>
    </location>
</feature>
<feature type="topological domain" description="Cytoplasmic" evidence="1">
    <location>
        <begin position="29"/>
        <end position="46"/>
    </location>
</feature>
<feature type="transmembrane region" description="Helical; Name=2" evidence="1">
    <location>
        <begin position="47"/>
        <end position="67"/>
    </location>
</feature>
<feature type="topological domain" description="Extracellular" evidence="1">
    <location>
        <begin position="68"/>
        <end position="86"/>
    </location>
</feature>
<feature type="transmembrane region" description="Helical; Name=3" evidence="1">
    <location>
        <begin position="87"/>
        <end position="107"/>
    </location>
</feature>
<feature type="topological domain" description="Cytoplasmic" evidence="1">
    <location>
        <begin position="108"/>
        <end position="127"/>
    </location>
</feature>
<feature type="transmembrane region" description="Helical; Name=4" evidence="1">
    <location>
        <begin position="128"/>
        <end position="148"/>
    </location>
</feature>
<feature type="topological domain" description="Extracellular" evidence="1">
    <location>
        <begin position="149"/>
        <end position="183"/>
    </location>
</feature>
<feature type="transmembrane region" description="Helical; Name=5" evidence="1">
    <location>
        <begin position="184"/>
        <end position="204"/>
    </location>
</feature>
<feature type="topological domain" description="Cytoplasmic" evidence="1">
    <location>
        <begin position="205"/>
        <end position="230"/>
    </location>
</feature>
<feature type="transmembrane region" description="Helical; Name=6" evidence="1">
    <location>
        <begin position="231"/>
        <end position="251"/>
    </location>
</feature>
<feature type="topological domain" description="Extracellular" evidence="1">
    <location>
        <begin position="252"/>
        <end position="261"/>
    </location>
</feature>
<feature type="transmembrane region" description="Helical; Name=7" evidence="1">
    <location>
        <begin position="262"/>
        <end position="282"/>
    </location>
</feature>
<feature type="topological domain" description="Cytoplasmic" evidence="1">
    <location>
        <begin position="283"/>
        <end position="309"/>
    </location>
</feature>
<feature type="glycosylation site" description="N-linked (GlcNAc...) asparagine" evidence="1">
    <location>
        <position position="160"/>
    </location>
</feature>
<feature type="glycosylation site" description="N-linked (GlcNAc...) asparagine" evidence="1">
    <location>
        <position position="180"/>
    </location>
</feature>
<feature type="glycosylation site" description="N-linked (GlcNAc...) asparagine" evidence="1">
    <location>
        <position position="255"/>
    </location>
</feature>
<proteinExistence type="inferred from homology"/>
<name>TR124_MOUSE</name>
<dbReference type="EMBL" id="AC152822">
    <property type="status" value="NOT_ANNOTATED_CDS"/>
    <property type="molecule type" value="Genomic_DNA"/>
</dbReference>
<dbReference type="EMBL" id="BK001079">
    <property type="protein sequence ID" value="DAA01218.1"/>
    <property type="molecule type" value="Genomic_DNA"/>
</dbReference>
<dbReference type="CCDS" id="CCDS20620.1"/>
<dbReference type="RefSeq" id="NP_996909.1">
    <property type="nucleotide sequence ID" value="NM_207026.1"/>
</dbReference>
<dbReference type="SMR" id="Q7M718"/>
<dbReference type="FunCoup" id="Q7M718">
    <property type="interactions" value="88"/>
</dbReference>
<dbReference type="STRING" id="10090.ENSMUSP00000075509"/>
<dbReference type="GlyCosmos" id="Q7M718">
    <property type="glycosylation" value="3 sites, No reported glycans"/>
</dbReference>
<dbReference type="GlyGen" id="Q7M718">
    <property type="glycosylation" value="3 sites"/>
</dbReference>
<dbReference type="iPTMnet" id="Q7M718"/>
<dbReference type="PhosphoSitePlus" id="Q7M718"/>
<dbReference type="PaxDb" id="10090-ENSMUSP00000075509"/>
<dbReference type="PeptideAtlas" id="Q7M718"/>
<dbReference type="DNASU" id="387351"/>
<dbReference type="Ensembl" id="ENSMUST00000076150.3">
    <property type="protein sequence ID" value="ENSMUSP00000075509.3"/>
    <property type="gene ID" value="ENSMUSG00000060412.3"/>
</dbReference>
<dbReference type="GeneID" id="387351"/>
<dbReference type="KEGG" id="mmu:387351"/>
<dbReference type="UCSC" id="uc009ejm.1">
    <property type="organism name" value="mouse"/>
</dbReference>
<dbReference type="AGR" id="MGI:2681267"/>
<dbReference type="CTD" id="387351"/>
<dbReference type="MGI" id="MGI:2681267">
    <property type="gene designation" value="Tas2r124"/>
</dbReference>
<dbReference type="VEuPathDB" id="HostDB:ENSMUSG00000060412"/>
<dbReference type="eggNOG" id="ENOG502TE6X">
    <property type="taxonomic scope" value="Eukaryota"/>
</dbReference>
<dbReference type="GeneTree" id="ENSGT01100000263477"/>
<dbReference type="HOGENOM" id="CLU_072337_2_0_1"/>
<dbReference type="InParanoid" id="Q7M718"/>
<dbReference type="OMA" id="ELVHIIC"/>
<dbReference type="OrthoDB" id="8876749at2759"/>
<dbReference type="PhylomeDB" id="Q7M718"/>
<dbReference type="TreeFam" id="TF335891"/>
<dbReference type="BioGRID-ORCS" id="387351">
    <property type="hits" value="2 hits in 76 CRISPR screens"/>
</dbReference>
<dbReference type="PRO" id="PR:Q7M718"/>
<dbReference type="Proteomes" id="UP000000589">
    <property type="component" value="Chromosome 6"/>
</dbReference>
<dbReference type="RNAct" id="Q7M718">
    <property type="molecule type" value="protein"/>
</dbReference>
<dbReference type="GO" id="GO:0016020">
    <property type="term" value="C:membrane"/>
    <property type="evidence" value="ECO:0007669"/>
    <property type="project" value="UniProtKB-SubCell"/>
</dbReference>
<dbReference type="GO" id="GO:0033038">
    <property type="term" value="F:bitter taste receptor activity"/>
    <property type="evidence" value="ECO:0007669"/>
    <property type="project" value="InterPro"/>
</dbReference>
<dbReference type="GO" id="GO:0004930">
    <property type="term" value="F:G protein-coupled receptor activity"/>
    <property type="evidence" value="ECO:0007669"/>
    <property type="project" value="UniProtKB-KW"/>
</dbReference>
<dbReference type="CDD" id="cd15026">
    <property type="entry name" value="7tm_TAS2R13"/>
    <property type="match status" value="1"/>
</dbReference>
<dbReference type="FunFam" id="1.20.1070.10:FF:000042">
    <property type="entry name" value="Taste receptor type 2 member 7"/>
    <property type="match status" value="1"/>
</dbReference>
<dbReference type="Gene3D" id="1.20.1070.10">
    <property type="entry name" value="Rhodopsin 7-helix transmembrane proteins"/>
    <property type="match status" value="1"/>
</dbReference>
<dbReference type="InterPro" id="IPR007960">
    <property type="entry name" value="TAS2R"/>
</dbReference>
<dbReference type="PANTHER" id="PTHR11394">
    <property type="entry name" value="TASTE RECEPTOR TYPE 2"/>
    <property type="match status" value="1"/>
</dbReference>
<dbReference type="PANTHER" id="PTHR11394:SF33">
    <property type="entry name" value="TASTE RECEPTOR TYPE 2 MEMBER 124"/>
    <property type="match status" value="1"/>
</dbReference>
<dbReference type="Pfam" id="PF05296">
    <property type="entry name" value="TAS2R"/>
    <property type="match status" value="1"/>
</dbReference>
<dbReference type="SUPFAM" id="SSF81321">
    <property type="entry name" value="Family A G protein-coupled receptor-like"/>
    <property type="match status" value="1"/>
</dbReference>
<evidence type="ECO:0000255" key="1"/>
<evidence type="ECO:0000303" key="2">
    <source>
    </source>
</evidence>
<evidence type="ECO:0000305" key="3"/>
<evidence type="ECO:0000312" key="4">
    <source>
        <dbReference type="EMBL" id="DAA01218.1"/>
    </source>
</evidence>
<evidence type="ECO:0000312" key="5">
    <source>
        <dbReference type="MGI" id="MGI:2681267"/>
    </source>
</evidence>
<comment type="function">
    <text evidence="3">Putative taste receptor which may play a role in the perception of bitterness.</text>
</comment>
<comment type="subcellular location">
    <subcellularLocation>
        <location evidence="3">Membrane</location>
        <topology evidence="3">Multi-pass membrane protein</topology>
    </subcellularLocation>
</comment>
<comment type="miscellaneous">
    <text evidence="3">Several bitter taste receptors are expressed in a single taste receptor cell.</text>
</comment>
<comment type="similarity">
    <text evidence="1">Belongs to the G-protein coupled receptor T2R family.</text>
</comment>